<accession>A1RFM0</accession>
<name>RIMK1_SHESW</name>
<comment type="cofactor">
    <cofactor evidence="1">
        <name>Mg(2+)</name>
        <dbReference type="ChEBI" id="CHEBI:18420"/>
    </cofactor>
    <cofactor evidence="1">
        <name>Mn(2+)</name>
        <dbReference type="ChEBI" id="CHEBI:29035"/>
    </cofactor>
    <text evidence="1">Binds 2 magnesium or manganese ions per subunit.</text>
</comment>
<comment type="similarity">
    <text evidence="1">Belongs to the RimK family.</text>
</comment>
<reference key="1">
    <citation type="submission" date="2006-12" db="EMBL/GenBank/DDBJ databases">
        <title>Complete sequence of Shewanella sp. W3-18-1.</title>
        <authorList>
            <consortium name="US DOE Joint Genome Institute"/>
            <person name="Copeland A."/>
            <person name="Lucas S."/>
            <person name="Lapidus A."/>
            <person name="Barry K."/>
            <person name="Detter J.C."/>
            <person name="Glavina del Rio T."/>
            <person name="Hammon N."/>
            <person name="Israni S."/>
            <person name="Dalin E."/>
            <person name="Tice H."/>
            <person name="Pitluck S."/>
            <person name="Chain P."/>
            <person name="Malfatti S."/>
            <person name="Shin M."/>
            <person name="Vergez L."/>
            <person name="Schmutz J."/>
            <person name="Larimer F."/>
            <person name="Land M."/>
            <person name="Hauser L."/>
            <person name="Kyrpides N."/>
            <person name="Lykidis A."/>
            <person name="Tiedje J."/>
            <person name="Richardson P."/>
        </authorList>
    </citation>
    <scope>NUCLEOTIDE SEQUENCE [LARGE SCALE GENOMIC DNA]</scope>
    <source>
        <strain>W3-18-1</strain>
    </source>
</reference>
<sequence length="301" mass="32423">MKIGILSQFPQLYSTQRLVAACESRGHEAVVINTLNCYMNINSIKPSIHYEGQELVGFDAIIPRIHASVTFYGCAVVRQFEMMGVFVANDSISIARSRDKLRALQLLSRKGIGMPITGFANKPNDIPDLINMVGGAPLVIKLLEGTQGIGVVLAETKTAAESVIEAFLGLKANILVQEYIKESNGSDIRCFVVGDKVVASMKRQGPEGDFRSNLHLGGCGETVKITSVERKMAIAAVKAMGLVVAGVDILRSNRGPLILEVNSAPGIEGIEQTTGISVTEPIVEYIEKMVAARKTNRPIIA</sequence>
<protein>
    <recommendedName>
        <fullName evidence="1">Probable alpha-L-glutamate ligase 1</fullName>
        <ecNumber evidence="1">6.3.2.-</ecNumber>
    </recommendedName>
</protein>
<dbReference type="EC" id="6.3.2.-" evidence="1"/>
<dbReference type="EMBL" id="CP000503">
    <property type="protein sequence ID" value="ABM23465.1"/>
    <property type="molecule type" value="Genomic_DNA"/>
</dbReference>
<dbReference type="SMR" id="A1RFM0"/>
<dbReference type="KEGG" id="shw:Sputw3181_0614"/>
<dbReference type="HOGENOM" id="CLU_054353_0_1_6"/>
<dbReference type="Proteomes" id="UP000002597">
    <property type="component" value="Chromosome"/>
</dbReference>
<dbReference type="GO" id="GO:0005737">
    <property type="term" value="C:cytoplasm"/>
    <property type="evidence" value="ECO:0007669"/>
    <property type="project" value="TreeGrafter"/>
</dbReference>
<dbReference type="GO" id="GO:0005524">
    <property type="term" value="F:ATP binding"/>
    <property type="evidence" value="ECO:0007669"/>
    <property type="project" value="UniProtKB-UniRule"/>
</dbReference>
<dbReference type="GO" id="GO:0046872">
    <property type="term" value="F:metal ion binding"/>
    <property type="evidence" value="ECO:0007669"/>
    <property type="project" value="UniProtKB-KW"/>
</dbReference>
<dbReference type="GO" id="GO:0018169">
    <property type="term" value="F:ribosomal S6-glutamic acid ligase activity"/>
    <property type="evidence" value="ECO:0007669"/>
    <property type="project" value="TreeGrafter"/>
</dbReference>
<dbReference type="GO" id="GO:0036211">
    <property type="term" value="P:protein modification process"/>
    <property type="evidence" value="ECO:0007669"/>
    <property type="project" value="InterPro"/>
</dbReference>
<dbReference type="GO" id="GO:0009432">
    <property type="term" value="P:SOS response"/>
    <property type="evidence" value="ECO:0007669"/>
    <property type="project" value="TreeGrafter"/>
</dbReference>
<dbReference type="GO" id="GO:0006412">
    <property type="term" value="P:translation"/>
    <property type="evidence" value="ECO:0007669"/>
    <property type="project" value="UniProtKB-KW"/>
</dbReference>
<dbReference type="FunFam" id="3.40.50.20:FF:000004">
    <property type="entry name" value="Probable alpha-L-glutamate ligase"/>
    <property type="match status" value="1"/>
</dbReference>
<dbReference type="FunFam" id="3.30.1490.20:FF:000005">
    <property type="entry name" value="Probable alpha-L-glutamate ligase 1"/>
    <property type="match status" value="1"/>
</dbReference>
<dbReference type="Gene3D" id="3.40.50.20">
    <property type="match status" value="1"/>
</dbReference>
<dbReference type="Gene3D" id="3.30.1490.20">
    <property type="entry name" value="ATP-grasp fold, A domain"/>
    <property type="match status" value="1"/>
</dbReference>
<dbReference type="Gene3D" id="3.30.470.20">
    <property type="entry name" value="ATP-grasp fold, B domain"/>
    <property type="match status" value="1"/>
</dbReference>
<dbReference type="HAMAP" id="MF_01552">
    <property type="entry name" value="RimK"/>
    <property type="match status" value="1"/>
</dbReference>
<dbReference type="InterPro" id="IPR011761">
    <property type="entry name" value="ATP-grasp"/>
</dbReference>
<dbReference type="InterPro" id="IPR013651">
    <property type="entry name" value="ATP-grasp_RimK-type"/>
</dbReference>
<dbReference type="InterPro" id="IPR013815">
    <property type="entry name" value="ATP_grasp_subdomain_1"/>
</dbReference>
<dbReference type="InterPro" id="IPR023533">
    <property type="entry name" value="RimK"/>
</dbReference>
<dbReference type="InterPro" id="IPR041107">
    <property type="entry name" value="Rimk_N"/>
</dbReference>
<dbReference type="InterPro" id="IPR004666">
    <property type="entry name" value="Rp_bS6_RimK/Lys_biosynth_LsyX"/>
</dbReference>
<dbReference type="NCBIfam" id="NF007764">
    <property type="entry name" value="PRK10446.1"/>
    <property type="match status" value="1"/>
</dbReference>
<dbReference type="NCBIfam" id="TIGR00768">
    <property type="entry name" value="rimK_fam"/>
    <property type="match status" value="1"/>
</dbReference>
<dbReference type="PANTHER" id="PTHR21621:SF7">
    <property type="entry name" value="RIBOSOMAL PROTEIN BS6--L-GLUTAMATE LIGASE"/>
    <property type="match status" value="1"/>
</dbReference>
<dbReference type="PANTHER" id="PTHR21621">
    <property type="entry name" value="RIBOSOMAL PROTEIN S6 MODIFICATION PROTEIN"/>
    <property type="match status" value="1"/>
</dbReference>
<dbReference type="Pfam" id="PF08443">
    <property type="entry name" value="RimK"/>
    <property type="match status" value="1"/>
</dbReference>
<dbReference type="Pfam" id="PF18030">
    <property type="entry name" value="Rimk_N"/>
    <property type="match status" value="1"/>
</dbReference>
<dbReference type="SUPFAM" id="SSF56059">
    <property type="entry name" value="Glutathione synthetase ATP-binding domain-like"/>
    <property type="match status" value="1"/>
</dbReference>
<dbReference type="PROSITE" id="PS50975">
    <property type="entry name" value="ATP_GRASP"/>
    <property type="match status" value="1"/>
</dbReference>
<gene>
    <name evidence="1" type="primary">rimK1</name>
    <name type="ordered locus">Sputw3181_0614</name>
</gene>
<proteinExistence type="inferred from homology"/>
<feature type="chain" id="PRO_0000340566" description="Probable alpha-L-glutamate ligase 1">
    <location>
        <begin position="1"/>
        <end position="301"/>
    </location>
</feature>
<feature type="domain" description="ATP-grasp" evidence="1">
    <location>
        <begin position="104"/>
        <end position="287"/>
    </location>
</feature>
<feature type="binding site" evidence="1">
    <location>
        <position position="141"/>
    </location>
    <ligand>
        <name>ATP</name>
        <dbReference type="ChEBI" id="CHEBI:30616"/>
    </ligand>
</feature>
<feature type="binding site" evidence="1">
    <location>
        <begin position="178"/>
        <end position="179"/>
    </location>
    <ligand>
        <name>ATP</name>
        <dbReference type="ChEBI" id="CHEBI:30616"/>
    </ligand>
</feature>
<feature type="binding site" evidence="1">
    <location>
        <position position="187"/>
    </location>
    <ligand>
        <name>ATP</name>
        <dbReference type="ChEBI" id="CHEBI:30616"/>
    </ligand>
</feature>
<feature type="binding site" evidence="1">
    <location>
        <begin position="211"/>
        <end position="213"/>
    </location>
    <ligand>
        <name>ATP</name>
        <dbReference type="ChEBI" id="CHEBI:30616"/>
    </ligand>
</feature>
<feature type="binding site" evidence="1">
    <location>
        <position position="248"/>
    </location>
    <ligand>
        <name>Mg(2+)</name>
        <dbReference type="ChEBI" id="CHEBI:18420"/>
        <label>1</label>
    </ligand>
</feature>
<feature type="binding site" evidence="1">
    <location>
        <position position="248"/>
    </location>
    <ligand>
        <name>Mn(2+)</name>
        <dbReference type="ChEBI" id="CHEBI:29035"/>
        <label>1</label>
    </ligand>
</feature>
<feature type="binding site" evidence="1">
    <location>
        <position position="260"/>
    </location>
    <ligand>
        <name>Mg(2+)</name>
        <dbReference type="ChEBI" id="CHEBI:18420"/>
        <label>1</label>
    </ligand>
</feature>
<feature type="binding site" evidence="1">
    <location>
        <position position="260"/>
    </location>
    <ligand>
        <name>Mg(2+)</name>
        <dbReference type="ChEBI" id="CHEBI:18420"/>
        <label>2</label>
    </ligand>
</feature>
<feature type="binding site" evidence="1">
    <location>
        <position position="260"/>
    </location>
    <ligand>
        <name>Mn(2+)</name>
        <dbReference type="ChEBI" id="CHEBI:29035"/>
        <label>1</label>
    </ligand>
</feature>
<feature type="binding site" evidence="1">
    <location>
        <position position="260"/>
    </location>
    <ligand>
        <name>Mn(2+)</name>
        <dbReference type="ChEBI" id="CHEBI:29035"/>
        <label>2</label>
    </ligand>
</feature>
<feature type="binding site" evidence="1">
    <location>
        <position position="262"/>
    </location>
    <ligand>
        <name>Mg(2+)</name>
        <dbReference type="ChEBI" id="CHEBI:18420"/>
        <label>2</label>
    </ligand>
</feature>
<feature type="binding site" evidence="1">
    <location>
        <position position="262"/>
    </location>
    <ligand>
        <name>Mn(2+)</name>
        <dbReference type="ChEBI" id="CHEBI:29035"/>
        <label>2</label>
    </ligand>
</feature>
<organism>
    <name type="scientific">Shewanella sp. (strain W3-18-1)</name>
    <dbReference type="NCBI Taxonomy" id="351745"/>
    <lineage>
        <taxon>Bacteria</taxon>
        <taxon>Pseudomonadati</taxon>
        <taxon>Pseudomonadota</taxon>
        <taxon>Gammaproteobacteria</taxon>
        <taxon>Alteromonadales</taxon>
        <taxon>Shewanellaceae</taxon>
        <taxon>Shewanella</taxon>
    </lineage>
</organism>
<keyword id="KW-0067">ATP-binding</keyword>
<keyword id="KW-0436">Ligase</keyword>
<keyword id="KW-0460">Magnesium</keyword>
<keyword id="KW-0464">Manganese</keyword>
<keyword id="KW-0479">Metal-binding</keyword>
<keyword id="KW-0547">Nucleotide-binding</keyword>
<keyword id="KW-0648">Protein biosynthesis</keyword>
<evidence type="ECO:0000255" key="1">
    <source>
        <dbReference type="HAMAP-Rule" id="MF_01552"/>
    </source>
</evidence>